<sequence>MIKIGSALLVDQGSGLVRTGWLKALAEDIAQLRAEGREVLIVSSGAIAVGRRSLHLEPGRMRLDEKQAAAAAGQIELAHAYRTVMADHAINVAQLLLTLDDSENRRRYLNARNCLETLLRLGVIPVINENDTVTTQEIRFGDNDRLAARVAQMACADALILLSDIDGLYTADPHRDPEARFIPTVTALTPEIAAMAGAALTPHGTGGMVTKLLAARICMDAGCAMAIAPGKDDHALRLLRQGGRQTWFLPAEEPRTARKAWISGALKAEGTLWVDDGAARALAAGSSLLPPGVRTVEGDFQRGAAVRVVGLDGSPLAKGLIAYPSDEARLLVGHRSGDIEALLGYRGREELIHRDDLVLDSRFRHRDEDGEGHRS</sequence>
<accession>Q2RV05</accession>
<keyword id="KW-0028">Amino-acid biosynthesis</keyword>
<keyword id="KW-0067">ATP-binding</keyword>
<keyword id="KW-0963">Cytoplasm</keyword>
<keyword id="KW-0418">Kinase</keyword>
<keyword id="KW-0547">Nucleotide-binding</keyword>
<keyword id="KW-0641">Proline biosynthesis</keyword>
<keyword id="KW-1185">Reference proteome</keyword>
<keyword id="KW-0808">Transferase</keyword>
<proteinExistence type="inferred from homology"/>
<gene>
    <name evidence="1" type="primary">proB</name>
    <name type="ordered locus">Rru_A1239</name>
</gene>
<feature type="chain" id="PRO_0000230064" description="Glutamate 5-kinase">
    <location>
        <begin position="1"/>
        <end position="375"/>
    </location>
</feature>
<feature type="domain" description="PUA" evidence="1">
    <location>
        <begin position="269"/>
        <end position="346"/>
    </location>
</feature>
<feature type="binding site" evidence="1">
    <location>
        <position position="3"/>
    </location>
    <ligand>
        <name>ATP</name>
        <dbReference type="ChEBI" id="CHEBI:30616"/>
    </ligand>
</feature>
<feature type="binding site" evidence="1">
    <location>
        <position position="44"/>
    </location>
    <ligand>
        <name>substrate</name>
    </ligand>
</feature>
<feature type="binding site" evidence="1">
    <location>
        <position position="131"/>
    </location>
    <ligand>
        <name>substrate</name>
    </ligand>
</feature>
<feature type="binding site" evidence="1">
    <location>
        <position position="143"/>
    </location>
    <ligand>
        <name>substrate</name>
    </ligand>
</feature>
<feature type="binding site" evidence="1">
    <location>
        <begin position="163"/>
        <end position="164"/>
    </location>
    <ligand>
        <name>ATP</name>
        <dbReference type="ChEBI" id="CHEBI:30616"/>
    </ligand>
</feature>
<feature type="binding site" evidence="1">
    <location>
        <begin position="205"/>
        <end position="211"/>
    </location>
    <ligand>
        <name>ATP</name>
        <dbReference type="ChEBI" id="CHEBI:30616"/>
    </ligand>
</feature>
<comment type="function">
    <text evidence="1">Catalyzes the transfer of a phosphate group to glutamate to form L-glutamate 5-phosphate.</text>
</comment>
<comment type="catalytic activity">
    <reaction evidence="1">
        <text>L-glutamate + ATP = L-glutamyl 5-phosphate + ADP</text>
        <dbReference type="Rhea" id="RHEA:14877"/>
        <dbReference type="ChEBI" id="CHEBI:29985"/>
        <dbReference type="ChEBI" id="CHEBI:30616"/>
        <dbReference type="ChEBI" id="CHEBI:58274"/>
        <dbReference type="ChEBI" id="CHEBI:456216"/>
        <dbReference type="EC" id="2.7.2.11"/>
    </reaction>
</comment>
<comment type="pathway">
    <text evidence="1">Amino-acid biosynthesis; L-proline biosynthesis; L-glutamate 5-semialdehyde from L-glutamate: step 1/2.</text>
</comment>
<comment type="subcellular location">
    <subcellularLocation>
        <location evidence="1">Cytoplasm</location>
    </subcellularLocation>
</comment>
<comment type="similarity">
    <text evidence="1">Belongs to the glutamate 5-kinase family.</text>
</comment>
<evidence type="ECO:0000255" key="1">
    <source>
        <dbReference type="HAMAP-Rule" id="MF_00456"/>
    </source>
</evidence>
<organism>
    <name type="scientific">Rhodospirillum rubrum (strain ATCC 11170 / ATH 1.1.1 / DSM 467 / LMG 4362 / NCIMB 8255 / S1)</name>
    <dbReference type="NCBI Taxonomy" id="269796"/>
    <lineage>
        <taxon>Bacteria</taxon>
        <taxon>Pseudomonadati</taxon>
        <taxon>Pseudomonadota</taxon>
        <taxon>Alphaproteobacteria</taxon>
        <taxon>Rhodospirillales</taxon>
        <taxon>Rhodospirillaceae</taxon>
        <taxon>Rhodospirillum</taxon>
    </lineage>
</organism>
<dbReference type="EC" id="2.7.2.11" evidence="1"/>
<dbReference type="EMBL" id="CP000230">
    <property type="protein sequence ID" value="ABC22040.1"/>
    <property type="molecule type" value="Genomic_DNA"/>
</dbReference>
<dbReference type="RefSeq" id="WP_011388994.1">
    <property type="nucleotide sequence ID" value="NC_007643.1"/>
</dbReference>
<dbReference type="RefSeq" id="YP_426327.1">
    <property type="nucleotide sequence ID" value="NC_007643.1"/>
</dbReference>
<dbReference type="SMR" id="Q2RV05"/>
<dbReference type="STRING" id="269796.Rru_A1239"/>
<dbReference type="EnsemblBacteria" id="ABC22040">
    <property type="protein sequence ID" value="ABC22040"/>
    <property type="gene ID" value="Rru_A1239"/>
</dbReference>
<dbReference type="KEGG" id="rru:Rru_A1239"/>
<dbReference type="PATRIC" id="fig|269796.9.peg.1304"/>
<dbReference type="eggNOG" id="COG0263">
    <property type="taxonomic scope" value="Bacteria"/>
</dbReference>
<dbReference type="HOGENOM" id="CLU_025400_2_0_5"/>
<dbReference type="PhylomeDB" id="Q2RV05"/>
<dbReference type="UniPathway" id="UPA00098">
    <property type="reaction ID" value="UER00359"/>
</dbReference>
<dbReference type="Proteomes" id="UP000001929">
    <property type="component" value="Chromosome"/>
</dbReference>
<dbReference type="GO" id="GO:0005829">
    <property type="term" value="C:cytosol"/>
    <property type="evidence" value="ECO:0007669"/>
    <property type="project" value="TreeGrafter"/>
</dbReference>
<dbReference type="GO" id="GO:0005524">
    <property type="term" value="F:ATP binding"/>
    <property type="evidence" value="ECO:0007669"/>
    <property type="project" value="UniProtKB-KW"/>
</dbReference>
<dbReference type="GO" id="GO:0004349">
    <property type="term" value="F:glutamate 5-kinase activity"/>
    <property type="evidence" value="ECO:0007669"/>
    <property type="project" value="UniProtKB-UniRule"/>
</dbReference>
<dbReference type="GO" id="GO:0003723">
    <property type="term" value="F:RNA binding"/>
    <property type="evidence" value="ECO:0007669"/>
    <property type="project" value="InterPro"/>
</dbReference>
<dbReference type="GO" id="GO:0055129">
    <property type="term" value="P:L-proline biosynthetic process"/>
    <property type="evidence" value="ECO:0007669"/>
    <property type="project" value="UniProtKB-UniRule"/>
</dbReference>
<dbReference type="CDD" id="cd04242">
    <property type="entry name" value="AAK_G5K_ProB"/>
    <property type="match status" value="1"/>
</dbReference>
<dbReference type="CDD" id="cd21157">
    <property type="entry name" value="PUA_G5K"/>
    <property type="match status" value="1"/>
</dbReference>
<dbReference type="FunFam" id="3.40.1160.10:FF:000018">
    <property type="entry name" value="Glutamate 5-kinase"/>
    <property type="match status" value="1"/>
</dbReference>
<dbReference type="Gene3D" id="3.40.1160.10">
    <property type="entry name" value="Acetylglutamate kinase-like"/>
    <property type="match status" value="2"/>
</dbReference>
<dbReference type="Gene3D" id="2.30.130.10">
    <property type="entry name" value="PUA domain"/>
    <property type="match status" value="1"/>
</dbReference>
<dbReference type="HAMAP" id="MF_00456">
    <property type="entry name" value="ProB"/>
    <property type="match status" value="1"/>
</dbReference>
<dbReference type="InterPro" id="IPR036393">
    <property type="entry name" value="AceGlu_kinase-like_sf"/>
</dbReference>
<dbReference type="InterPro" id="IPR001048">
    <property type="entry name" value="Asp/Glu/Uridylate_kinase"/>
</dbReference>
<dbReference type="InterPro" id="IPR041739">
    <property type="entry name" value="G5K_ProB"/>
</dbReference>
<dbReference type="InterPro" id="IPR001057">
    <property type="entry name" value="Glu/AcGlu_kinase"/>
</dbReference>
<dbReference type="InterPro" id="IPR011529">
    <property type="entry name" value="Glu_5kinase"/>
</dbReference>
<dbReference type="InterPro" id="IPR005715">
    <property type="entry name" value="Glu_5kinase/COase_Synthase"/>
</dbReference>
<dbReference type="InterPro" id="IPR019797">
    <property type="entry name" value="Glutamate_5-kinase_CS"/>
</dbReference>
<dbReference type="InterPro" id="IPR002478">
    <property type="entry name" value="PUA"/>
</dbReference>
<dbReference type="InterPro" id="IPR015947">
    <property type="entry name" value="PUA-like_sf"/>
</dbReference>
<dbReference type="InterPro" id="IPR036974">
    <property type="entry name" value="PUA_sf"/>
</dbReference>
<dbReference type="NCBIfam" id="TIGR01027">
    <property type="entry name" value="proB"/>
    <property type="match status" value="1"/>
</dbReference>
<dbReference type="PANTHER" id="PTHR43654">
    <property type="entry name" value="GLUTAMATE 5-KINASE"/>
    <property type="match status" value="1"/>
</dbReference>
<dbReference type="PANTHER" id="PTHR43654:SF1">
    <property type="entry name" value="ISOPENTENYL PHOSPHATE KINASE"/>
    <property type="match status" value="1"/>
</dbReference>
<dbReference type="Pfam" id="PF00696">
    <property type="entry name" value="AA_kinase"/>
    <property type="match status" value="1"/>
</dbReference>
<dbReference type="Pfam" id="PF01472">
    <property type="entry name" value="PUA"/>
    <property type="match status" value="1"/>
</dbReference>
<dbReference type="PIRSF" id="PIRSF000729">
    <property type="entry name" value="GK"/>
    <property type="match status" value="1"/>
</dbReference>
<dbReference type="PRINTS" id="PR00474">
    <property type="entry name" value="GLU5KINASE"/>
</dbReference>
<dbReference type="SMART" id="SM00359">
    <property type="entry name" value="PUA"/>
    <property type="match status" value="1"/>
</dbReference>
<dbReference type="SUPFAM" id="SSF53633">
    <property type="entry name" value="Carbamate kinase-like"/>
    <property type="match status" value="1"/>
</dbReference>
<dbReference type="SUPFAM" id="SSF88697">
    <property type="entry name" value="PUA domain-like"/>
    <property type="match status" value="1"/>
</dbReference>
<dbReference type="PROSITE" id="PS00902">
    <property type="entry name" value="GLUTAMATE_5_KINASE"/>
    <property type="match status" value="1"/>
</dbReference>
<dbReference type="PROSITE" id="PS50890">
    <property type="entry name" value="PUA"/>
    <property type="match status" value="1"/>
</dbReference>
<reference key="1">
    <citation type="journal article" date="2011" name="Stand. Genomic Sci.">
        <title>Complete genome sequence of Rhodospirillum rubrum type strain (S1).</title>
        <authorList>
            <person name="Munk A.C."/>
            <person name="Copeland A."/>
            <person name="Lucas S."/>
            <person name="Lapidus A."/>
            <person name="Del Rio T.G."/>
            <person name="Barry K."/>
            <person name="Detter J.C."/>
            <person name="Hammon N."/>
            <person name="Israni S."/>
            <person name="Pitluck S."/>
            <person name="Brettin T."/>
            <person name="Bruce D."/>
            <person name="Han C."/>
            <person name="Tapia R."/>
            <person name="Gilna P."/>
            <person name="Schmutz J."/>
            <person name="Larimer F."/>
            <person name="Land M."/>
            <person name="Kyrpides N.C."/>
            <person name="Mavromatis K."/>
            <person name="Richardson P."/>
            <person name="Rohde M."/>
            <person name="Goeker M."/>
            <person name="Klenk H.P."/>
            <person name="Zhang Y."/>
            <person name="Roberts G.P."/>
            <person name="Reslewic S."/>
            <person name="Schwartz D.C."/>
        </authorList>
    </citation>
    <scope>NUCLEOTIDE SEQUENCE [LARGE SCALE GENOMIC DNA]</scope>
    <source>
        <strain>ATCC 11170 / ATH 1.1.1 / DSM 467 / LMG 4362 / NCIMB 8255 / S1</strain>
    </source>
</reference>
<protein>
    <recommendedName>
        <fullName evidence="1">Glutamate 5-kinase</fullName>
        <ecNumber evidence="1">2.7.2.11</ecNumber>
    </recommendedName>
    <alternativeName>
        <fullName evidence="1">Gamma-glutamyl kinase</fullName>
        <shortName evidence="1">GK</shortName>
    </alternativeName>
</protein>
<name>PROB_RHORT</name>